<comment type="function">
    <text evidence="2 3 4 5">Structural component of the muscle thick filaments which is involved in assembly and organization of sarcomere myofilaments (PubMed:27009202, PubMed:2754728). Involved in ovulation (PubMed:17326220). Plays a role in the formation of muscle connections, also called muscle arm extensions, between the body wall and the motor axons in the dorsal and ventral cord (PubMed:27123983).</text>
</comment>
<comment type="subunit">
    <text evidence="3 7">Homodimer (Probable). May interact with unc-89 (via SH3 domain) (PubMed:27009202).</text>
</comment>
<comment type="subcellular location">
    <subcellularLocation>
        <location evidence="2 3">Cytoplasm</location>
        <location evidence="2 3">Myofibril</location>
        <location evidence="2 3">Sarcomere</location>
        <location evidence="2 3">A band</location>
    </subcellularLocation>
    <text evidence="2">Localizes in punctate patterns along the myosin heavy chain myo-3 filaments in myoepithelial sheath cells.</text>
</comment>
<comment type="alternative products">
    <event type="alternative splicing"/>
    <isoform>
        <id>P10567-1</id>
        <name evidence="8">a</name>
        <sequence type="displayed"/>
    </isoform>
    <isoform>
        <id>P10567-2</id>
        <name evidence="9">b</name>
        <sequence type="described" ref="VSP_058762"/>
    </isoform>
</comment>
<comment type="tissue specificity">
    <text evidence="2 3">Expressed in body wall muscles of larvae and adults (at protein level) (PubMed:27009202). Expressed in gonadal myoepithelial sheath cells (at protein level) (PubMed:17326220).</text>
</comment>
<comment type="domain">
    <text>For most of its length, paramyosin appears to form an alpha-helical coiled coil and shows the heptad repeat of hydrophobic amino acid residues and the 28-residue repeat of charged amino acids characteristic of myosin heavy chains. However, paramyosin differs from myosin in having non-helical extensions at both termini and an additional 'skip' residue that interrupts the 28-residue repeat. The distribution of charged residues is also different from myosin heavy chains.</text>
</comment>
<comment type="PTM">
    <text evidence="6">Phosphorylated on serine residues in the N-terminal non-helical region.</text>
</comment>
<comment type="disruption phenotype">
    <text evidence="2 4">Defective extension of body wall muscle connections or arms towards the ventral nerve cord (PubMed:27123983). Double knockout with madd-3 results in severe muscle arm extension defects (PubMed:27123983). RNAi-mediated knockdown causes an accumulation in the proximal gonad of endomitotic mature oocytes in 22 percent of animals (PubMed:17326220).</text>
</comment>
<comment type="similarity">
    <text evidence="7">Belongs to the paramyosin family.</text>
</comment>
<comment type="sequence caution" evidence="7">
    <conflict type="erroneous gene model prediction">
        <sequence resource="EMBL-CDS" id="CAA30857"/>
    </conflict>
</comment>
<protein>
    <recommendedName>
        <fullName>Paramyosin</fullName>
    </recommendedName>
    <alternativeName>
        <fullName>Uncoordinated protein 15</fullName>
    </alternativeName>
</protein>
<evidence type="ECO:0000255" key="1"/>
<evidence type="ECO:0000269" key="2">
    <source>
    </source>
</evidence>
<evidence type="ECO:0000269" key="3">
    <source>
    </source>
</evidence>
<evidence type="ECO:0000269" key="4">
    <source>
    </source>
</evidence>
<evidence type="ECO:0000269" key="5">
    <source>
    </source>
</evidence>
<evidence type="ECO:0000269" key="6">
    <source>
    </source>
</evidence>
<evidence type="ECO:0000305" key="7"/>
<evidence type="ECO:0000312" key="8">
    <source>
        <dbReference type="WormBase" id="F07A5.7a"/>
    </source>
</evidence>
<evidence type="ECO:0000312" key="9">
    <source>
        <dbReference type="WormBase" id="F07A5.7b"/>
    </source>
</evidence>
<dbReference type="EMBL" id="X08068">
    <property type="protein sequence ID" value="CAA30857.1"/>
    <property type="status" value="ALT_SEQ"/>
    <property type="molecule type" value="Genomic_DNA"/>
</dbReference>
<dbReference type="EMBL" id="Z72506">
    <property type="protein sequence ID" value="CAA96622.1"/>
    <property type="molecule type" value="Genomic_DNA"/>
</dbReference>
<dbReference type="EMBL" id="Z79694">
    <property type="protein sequence ID" value="CAA96622.1"/>
    <property type="status" value="JOINED"/>
    <property type="molecule type" value="Genomic_DNA"/>
</dbReference>
<dbReference type="EMBL" id="BX284601">
    <property type="protein sequence ID" value="CAQ76467.1"/>
    <property type="molecule type" value="Genomic_DNA"/>
</dbReference>
<dbReference type="PIR" id="S04027">
    <property type="entry name" value="S04027"/>
</dbReference>
<dbReference type="PIR" id="T19296">
    <property type="entry name" value="T19296"/>
</dbReference>
<dbReference type="RefSeq" id="NP_001129763.1">
    <property type="nucleotide sequence ID" value="NM_001136291.2"/>
</dbReference>
<dbReference type="RefSeq" id="NP_001367193.1">
    <molecule id="P10567-2"/>
    <property type="nucleotide sequence ID" value="NM_001380695.1"/>
</dbReference>
<dbReference type="RefSeq" id="NP_001379131.1">
    <molecule id="P10567-1"/>
    <property type="nucleotide sequence ID" value="NM_001392551.1"/>
</dbReference>
<dbReference type="RefSeq" id="NP_492085.1">
    <property type="nucleotide sequence ID" value="NM_059684.5"/>
</dbReference>
<dbReference type="SMR" id="P10567"/>
<dbReference type="BioGRID" id="37933">
    <property type="interactions" value="31"/>
</dbReference>
<dbReference type="DIP" id="DIP-24443N"/>
<dbReference type="FunCoup" id="P10567">
    <property type="interactions" value="62"/>
</dbReference>
<dbReference type="IntAct" id="P10567">
    <property type="interactions" value="14"/>
</dbReference>
<dbReference type="MINT" id="P10567"/>
<dbReference type="STRING" id="6239.F07A5.7a.2"/>
<dbReference type="PaxDb" id="6239-F07A5.7a.4"/>
<dbReference type="PeptideAtlas" id="P10567"/>
<dbReference type="EnsemblMetazoa" id="F07A5.7a.1">
    <molecule id="P10567-1"/>
    <property type="protein sequence ID" value="F07A5.7a.1"/>
    <property type="gene ID" value="WBGene00006754"/>
</dbReference>
<dbReference type="EnsemblMetazoa" id="F07A5.7a.2">
    <molecule id="P10567-1"/>
    <property type="protein sequence ID" value="F07A5.7a.2"/>
    <property type="gene ID" value="WBGene00006754"/>
</dbReference>
<dbReference type="EnsemblMetazoa" id="F07A5.7b.1">
    <molecule id="P10567-2"/>
    <property type="protein sequence ID" value="F07A5.7b.1"/>
    <property type="gene ID" value="WBGene00006754"/>
</dbReference>
<dbReference type="GeneID" id="172491"/>
<dbReference type="UCSC" id="F07A5.7.1">
    <molecule id="P10567-1"/>
    <property type="organism name" value="c. elegans"/>
</dbReference>
<dbReference type="AGR" id="WB:WBGene00006754"/>
<dbReference type="WormBase" id="F07A5.7a">
    <molecule id="P10567-1"/>
    <property type="protein sequence ID" value="CE09197"/>
    <property type="gene ID" value="WBGene00006754"/>
    <property type="gene designation" value="unc-15"/>
</dbReference>
<dbReference type="WormBase" id="F07A5.7b">
    <molecule id="P10567-2"/>
    <property type="protein sequence ID" value="CE42754"/>
    <property type="gene ID" value="WBGene00006754"/>
    <property type="gene designation" value="unc-15"/>
</dbReference>
<dbReference type="eggNOG" id="KOG0161">
    <property type="taxonomic scope" value="Eukaryota"/>
</dbReference>
<dbReference type="GeneTree" id="ENSGT00940000173651"/>
<dbReference type="HOGENOM" id="CLU_000192_13_6_1"/>
<dbReference type="InParanoid" id="P10567"/>
<dbReference type="OMA" id="HYDEVHR"/>
<dbReference type="OrthoDB" id="2018427at2759"/>
<dbReference type="PhylomeDB" id="P10567"/>
<dbReference type="SignaLink" id="P10567"/>
<dbReference type="PRO" id="PR:P10567"/>
<dbReference type="Proteomes" id="UP000001940">
    <property type="component" value="Chromosome I"/>
</dbReference>
<dbReference type="Bgee" id="WBGene00006754">
    <property type="expression patterns" value="Expressed in larva and 4 other cell types or tissues"/>
</dbReference>
<dbReference type="GO" id="GO:0031672">
    <property type="term" value="C:A band"/>
    <property type="evidence" value="ECO:0000314"/>
    <property type="project" value="UniProtKB"/>
</dbReference>
<dbReference type="GO" id="GO:0005737">
    <property type="term" value="C:cytoplasm"/>
    <property type="evidence" value="ECO:0000318"/>
    <property type="project" value="GO_Central"/>
</dbReference>
<dbReference type="GO" id="GO:0005856">
    <property type="term" value="C:cytoskeleton"/>
    <property type="evidence" value="ECO:0000318"/>
    <property type="project" value="GO_Central"/>
</dbReference>
<dbReference type="GO" id="GO:0016459">
    <property type="term" value="C:myosin complex"/>
    <property type="evidence" value="ECO:0007669"/>
    <property type="project" value="UniProtKB-KW"/>
</dbReference>
<dbReference type="GO" id="GO:0032982">
    <property type="term" value="C:myosin filament"/>
    <property type="evidence" value="ECO:0000314"/>
    <property type="project" value="WormBase"/>
</dbReference>
<dbReference type="GO" id="GO:0008092">
    <property type="term" value="F:cytoskeletal protein binding"/>
    <property type="evidence" value="ECO:0000353"/>
    <property type="project" value="WormBase"/>
</dbReference>
<dbReference type="GO" id="GO:0019901">
    <property type="term" value="F:protein kinase binding"/>
    <property type="evidence" value="ECO:0000353"/>
    <property type="project" value="UniProtKB"/>
</dbReference>
<dbReference type="GO" id="GO:0072518">
    <property type="term" value="F:Rho-dependent protein serine/threonine kinase activity"/>
    <property type="evidence" value="ECO:0000318"/>
    <property type="project" value="GO_Central"/>
</dbReference>
<dbReference type="GO" id="GO:0017124">
    <property type="term" value="F:SH3 domain binding"/>
    <property type="evidence" value="ECO:0000315"/>
    <property type="project" value="UniProtKB"/>
</dbReference>
<dbReference type="GO" id="GO:0031032">
    <property type="term" value="P:actomyosin structure organization"/>
    <property type="evidence" value="ECO:0000318"/>
    <property type="project" value="GO_Central"/>
</dbReference>
<dbReference type="GO" id="GO:0030866">
    <property type="term" value="P:cortical actin cytoskeleton organization"/>
    <property type="evidence" value="ECO:0000318"/>
    <property type="project" value="GO_Central"/>
</dbReference>
<dbReference type="GO" id="GO:0048598">
    <property type="term" value="P:embryonic morphogenesis"/>
    <property type="evidence" value="ECO:0000318"/>
    <property type="project" value="GO_Central"/>
</dbReference>
<dbReference type="GO" id="GO:0040011">
    <property type="term" value="P:locomotion"/>
    <property type="evidence" value="ECO:0000315"/>
    <property type="project" value="WormBase"/>
</dbReference>
<dbReference type="GO" id="GO:0000281">
    <property type="term" value="P:mitotic cytokinesis"/>
    <property type="evidence" value="ECO:0000318"/>
    <property type="project" value="GO_Central"/>
</dbReference>
<dbReference type="GO" id="GO:0060279">
    <property type="term" value="P:positive regulation of ovulation"/>
    <property type="evidence" value="ECO:0000315"/>
    <property type="project" value="UniProtKB"/>
</dbReference>
<dbReference type="GO" id="GO:0060298">
    <property type="term" value="P:positive regulation of sarcomere organization"/>
    <property type="evidence" value="ECO:0000315"/>
    <property type="project" value="UniProtKB"/>
</dbReference>
<dbReference type="GO" id="GO:0032956">
    <property type="term" value="P:regulation of actin cytoskeleton organization"/>
    <property type="evidence" value="ECO:0000318"/>
    <property type="project" value="GO_Central"/>
</dbReference>
<dbReference type="GO" id="GO:1901888">
    <property type="term" value="P:regulation of cell junction assembly"/>
    <property type="evidence" value="ECO:0000318"/>
    <property type="project" value="GO_Central"/>
</dbReference>
<dbReference type="GO" id="GO:0051493">
    <property type="term" value="P:regulation of cytoskeleton organization"/>
    <property type="evidence" value="ECO:0000315"/>
    <property type="project" value="WormBase"/>
</dbReference>
<dbReference type="GO" id="GO:0007266">
    <property type="term" value="P:Rho protein signal transduction"/>
    <property type="evidence" value="ECO:0000318"/>
    <property type="project" value="GO_Central"/>
</dbReference>
<dbReference type="GO" id="GO:0030241">
    <property type="term" value="P:skeletal muscle myosin thick filament assembly"/>
    <property type="evidence" value="ECO:0000315"/>
    <property type="project" value="WormBase"/>
</dbReference>
<dbReference type="FunFam" id="1.20.5.370:FF:000001">
    <property type="entry name" value="Myosin heavy chain"/>
    <property type="match status" value="1"/>
</dbReference>
<dbReference type="FunFam" id="1.20.5.340:FF:000035">
    <property type="entry name" value="Paramyosin, long form"/>
    <property type="match status" value="1"/>
</dbReference>
<dbReference type="Gene3D" id="1.20.5.340">
    <property type="match status" value="1"/>
</dbReference>
<dbReference type="Gene3D" id="1.20.5.370">
    <property type="match status" value="1"/>
</dbReference>
<dbReference type="Gene3D" id="1.20.5.1160">
    <property type="entry name" value="Vasodilator-stimulated phosphoprotein"/>
    <property type="match status" value="2"/>
</dbReference>
<dbReference type="InterPro" id="IPR002928">
    <property type="entry name" value="Myosin_tail"/>
</dbReference>
<dbReference type="InterPro" id="IPR014751">
    <property type="entry name" value="XRCC4-like_C"/>
</dbReference>
<dbReference type="PANTHER" id="PTHR46349">
    <property type="entry name" value="CINGULIN-LIKE PROTEIN 1-RELATED"/>
    <property type="match status" value="1"/>
</dbReference>
<dbReference type="PANTHER" id="PTHR46349:SF7">
    <property type="entry name" value="MYOSIN TAIL DOMAIN-CONTAINING PROTEIN"/>
    <property type="match status" value="1"/>
</dbReference>
<dbReference type="Pfam" id="PF01576">
    <property type="entry name" value="Myosin_tail_1"/>
    <property type="match status" value="1"/>
</dbReference>
<dbReference type="SUPFAM" id="SSF90257">
    <property type="entry name" value="Myosin rod fragments"/>
    <property type="match status" value="2"/>
</dbReference>
<sequence>MSLYRSPSAALLKSPSQAAFGAPFGSMSVADLGSLTRLEDKIRLLQEDLESERELRNRVERERADLSVQVIALTDRLEDAEGTTDSQIESNRKREGELSKLRKLLEESQLESEDAMNVLRKKHQDSCLDYQDQIEQLQKKNAKIDRERQRVQHEVIELTATIDQLQKDKHTAEKAAERFEAQANELANKVEDLNKHVNDLAQQRQRLQAENNDLLKEVHDQKVQLDNLQHVKYTLAQQLEEARRRLEDAERERSQLQSQLHQVQLELDSVRTALDEESIARSDAEHKLNLANTEITQWKSKFDAEVALHHEEVEDLRKKMLQKQAEYEEQIEIMLQKISQLEKAKSRLQSEVEVLIVDLEKAQNTIALLERAREQLERQVGELKVRIDEITVELEAAQRELRAVNAELQKMKHLYEKAVEQKEALARENKKLHDELHEAKEALADANRKLHELDLENARLAGEIRELQTALKEADAQRRDAENRAQRALAELQALRIEMERRLQEKEEEMEALRKNLQFEIDRLIAALADAEARMKSEISRLKKKYQAEIAELEMTVDNLNRANIEAQKTIKKQSEQLKILQASLEDTQRQLQQVLDQYALAQRKVAALSAELEECKTALDNAIRARKQAEVDLEEANGRISDLISINNNLTSIKNKLETELSTAQADLDEVTKELHAADERANRALADAARAVEQLHEEQEHSMKIDALRKSLEEQVKQLQVQIQEAEAAALLGGKRVIAKLETRIRDLETALDEETRRHKETQNALRKKDRRIKEVQQLVDEEHKNFVMAQDTADRLTEKLNIQKRQLAESESVTMQNLQRVRRYQHELEDAEGRADQAESSLHLIRAKHRSSVVTGKSSSKIFVTEDDY</sequence>
<reference key="1">
    <citation type="journal article" date="1989" name="J. Mol. Biol.">
        <title>Paramyosin gene (unc-15) of Caenorhabditis elegans. Molecular cloning, nucleotide sequence and models for thick filament structure.</title>
        <authorList>
            <person name="Kagawa H."/>
            <person name="Gengyo K."/>
            <person name="McLachlan A.D."/>
            <person name="Brenner S."/>
            <person name="Karn J."/>
        </authorList>
    </citation>
    <scope>NUCLEOTIDE SEQUENCE [GENOMIC DNA]</scope>
    <scope>PARTIAL PROTEIN SEQUENCE</scope>
    <scope>FUNCTION</scope>
    <source>
        <strain>Bristol N2</strain>
    </source>
</reference>
<reference key="2">
    <citation type="journal article" date="1990" name="J. Mol. Biol.">
        <authorList>
            <person name="Kagawa H."/>
            <person name="Gengyo K."/>
            <person name="McLachlan A.D."/>
            <person name="Brenner S."/>
            <person name="Karn J."/>
        </authorList>
    </citation>
    <scope>ERRATUM OF PUBMED:2754728</scope>
</reference>
<reference key="3">
    <citation type="journal article" date="1998" name="Science">
        <title>Genome sequence of the nematode C. elegans: a platform for investigating biology.</title>
        <authorList>
            <consortium name="The C. elegans sequencing consortium"/>
        </authorList>
    </citation>
    <scope>NUCLEOTIDE SEQUENCE [LARGE SCALE GENOMIC DNA]</scope>
    <source>
        <strain>Bristol N2</strain>
    </source>
</reference>
<reference key="4">
    <citation type="journal article" date="1989" name="J. Mol. Biol.">
        <title>Phosphorylation of the N-terminal region of Caenorhabditis elegans paramyosin.</title>
        <authorList>
            <person name="Schriefer L.A."/>
            <person name="Waterston R.H."/>
        </authorList>
    </citation>
    <scope>PHOSPHORYLATION</scope>
</reference>
<reference key="5">
    <citation type="journal article" date="2007" name="Dev. Dyn.">
        <title>Structural components of the nonstriated contractile apparatuses in the Caenorhabditis elegans gonadal myoepithelial sheath and their essential roles for ovulation.</title>
        <authorList>
            <person name="Ono K."/>
            <person name="Yu R."/>
            <person name="Ono S."/>
        </authorList>
    </citation>
    <scope>FUNCTION</scope>
    <scope>SUBCELLULAR LOCATION</scope>
    <scope>TISSUE SPECIFICITY</scope>
    <scope>DISRUPTION PHENOTYPE</scope>
</reference>
<reference key="6">
    <citation type="journal article" date="2016" name="Mol. Biol. Cell">
        <title>The SH3 domain of UNC-89 (obscurin) interacts with paramyosin, a coiled-coil protein, in Caenorhabditis elegans muscle.</title>
        <authorList>
            <person name="Qadota H."/>
            <person name="Mayans O."/>
            <person name="Matsunaga Y."/>
            <person name="McMurry J.L."/>
            <person name="Wilson K.J."/>
            <person name="Kwon G.E."/>
            <person name="Stanford R."/>
            <person name="Deehan K."/>
            <person name="Tinley T.L."/>
            <person name="Ngwa V.M."/>
            <person name="Benian G.M."/>
        </authorList>
    </citation>
    <scope>FUNCTION</scope>
    <scope>INTERACTION WITH UNC-89</scope>
    <scope>SUBCELLULAR LOCATION</scope>
    <scope>TISSUE SPECIFICITY</scope>
    <scope>REGION</scope>
</reference>
<reference key="7">
    <citation type="journal article" date="2016" name="PLoS Genet.">
        <title>The MADD-3 LAMMER kinase interacts with a p38 MAP kinase pathway to regulate the display of the EVA-1 guidance receptor in Caenorhabditis elegans.</title>
        <authorList>
            <person name="D'Souza S.A."/>
            <person name="Rajendran L."/>
            <person name="Bagg R."/>
            <person name="Barbier L."/>
            <person name="van Pel D.M."/>
            <person name="Moshiri H."/>
            <person name="Roy P.J."/>
        </authorList>
    </citation>
    <scope>FUNCTION</scope>
    <scope>DISRUPTION PHENOTYPE</scope>
</reference>
<organism>
    <name type="scientific">Caenorhabditis elegans</name>
    <dbReference type="NCBI Taxonomy" id="6239"/>
    <lineage>
        <taxon>Eukaryota</taxon>
        <taxon>Metazoa</taxon>
        <taxon>Ecdysozoa</taxon>
        <taxon>Nematoda</taxon>
        <taxon>Chromadorea</taxon>
        <taxon>Rhabditida</taxon>
        <taxon>Rhabditina</taxon>
        <taxon>Rhabditomorpha</taxon>
        <taxon>Rhabditoidea</taxon>
        <taxon>Rhabditidae</taxon>
        <taxon>Peloderinae</taxon>
        <taxon>Caenorhabditis</taxon>
    </lineage>
</organism>
<accession>P10567</accession>
<accession>B3WFV3</accession>
<accession>Q93214</accession>
<accession>Q93439</accession>
<proteinExistence type="evidence at protein level"/>
<feature type="chain" id="PRO_0000211246" description="Paramyosin">
    <location>
        <begin position="1"/>
        <end position="872"/>
    </location>
</feature>
<feature type="region of interest" description="Nonhelical region" evidence="1">
    <location>
        <begin position="1"/>
        <end position="31"/>
    </location>
</feature>
<feature type="region of interest" description="Interaction with unc-89" evidence="3">
    <location>
        <begin position="294"/>
        <end position="376"/>
    </location>
</feature>
<feature type="region of interest" description="Nonhelical region" evidence="1">
    <location>
        <begin position="856"/>
        <end position="866"/>
    </location>
</feature>
<feature type="coiled-coil region" evidence="1">
    <location>
        <begin position="32"/>
        <end position="851"/>
    </location>
</feature>
<feature type="disulfide bond" description="Interchain" evidence="1">
    <location>
        <position position="127"/>
    </location>
</feature>
<feature type="disulfide bond" description="Interchain" evidence="1">
    <location>
        <position position="616"/>
    </location>
</feature>
<feature type="splice variant" id="VSP_058762" description="In isoform b." evidence="7">
    <location>
        <begin position="1"/>
        <end position="319"/>
    </location>
</feature>
<gene>
    <name type="primary">unc-15</name>
    <name type="ORF">F07A5.7</name>
</gene>
<name>MYSP_CAEEL</name>
<keyword id="KW-0025">Alternative splicing</keyword>
<keyword id="KW-0175">Coiled coil</keyword>
<keyword id="KW-0963">Cytoplasm</keyword>
<keyword id="KW-0903">Direct protein sequencing</keyword>
<keyword id="KW-1015">Disulfide bond</keyword>
<keyword id="KW-0505">Motor protein</keyword>
<keyword id="KW-0514">Muscle protein</keyword>
<keyword id="KW-0518">Myosin</keyword>
<keyword id="KW-0597">Phosphoprotein</keyword>
<keyword id="KW-1185">Reference proteome</keyword>
<keyword id="KW-0787">Thick filament</keyword>